<name>RL14E_PYRIL</name>
<feature type="chain" id="PRO_1000045824" description="Large ribosomal subunit protein eL14">
    <location>
        <begin position="1"/>
        <end position="103"/>
    </location>
</feature>
<dbReference type="EMBL" id="CP000504">
    <property type="protein sequence ID" value="ABL88298.1"/>
    <property type="molecule type" value="Genomic_DNA"/>
</dbReference>
<dbReference type="RefSeq" id="WP_011762873.1">
    <property type="nucleotide sequence ID" value="NC_008701.1"/>
</dbReference>
<dbReference type="SMR" id="A1RTL6"/>
<dbReference type="STRING" id="384616.Pisl_1127"/>
<dbReference type="GeneID" id="4618338"/>
<dbReference type="KEGG" id="pis:Pisl_1127"/>
<dbReference type="eggNOG" id="arCOG04167">
    <property type="taxonomic scope" value="Archaea"/>
</dbReference>
<dbReference type="HOGENOM" id="CLU_183474_0_0_2"/>
<dbReference type="OrthoDB" id="63594at2157"/>
<dbReference type="Proteomes" id="UP000002595">
    <property type="component" value="Chromosome"/>
</dbReference>
<dbReference type="GO" id="GO:0022625">
    <property type="term" value="C:cytosolic large ribosomal subunit"/>
    <property type="evidence" value="ECO:0007669"/>
    <property type="project" value="TreeGrafter"/>
</dbReference>
<dbReference type="GO" id="GO:0003723">
    <property type="term" value="F:RNA binding"/>
    <property type="evidence" value="ECO:0007669"/>
    <property type="project" value="InterPro"/>
</dbReference>
<dbReference type="GO" id="GO:0003735">
    <property type="term" value="F:structural constituent of ribosome"/>
    <property type="evidence" value="ECO:0007669"/>
    <property type="project" value="InterPro"/>
</dbReference>
<dbReference type="GO" id="GO:0042273">
    <property type="term" value="P:ribosomal large subunit biogenesis"/>
    <property type="evidence" value="ECO:0007669"/>
    <property type="project" value="TreeGrafter"/>
</dbReference>
<dbReference type="GO" id="GO:0006412">
    <property type="term" value="P:translation"/>
    <property type="evidence" value="ECO:0007669"/>
    <property type="project" value="UniProtKB-UniRule"/>
</dbReference>
<dbReference type="CDD" id="cd06088">
    <property type="entry name" value="KOW_RPL14"/>
    <property type="match status" value="1"/>
</dbReference>
<dbReference type="FunFam" id="2.30.30.30:FF:000045">
    <property type="entry name" value="50S ribosomal protein L14e"/>
    <property type="match status" value="1"/>
</dbReference>
<dbReference type="Gene3D" id="2.30.30.30">
    <property type="match status" value="1"/>
</dbReference>
<dbReference type="HAMAP" id="MF_00721">
    <property type="entry name" value="Ribosomal_eL14"/>
    <property type="match status" value="1"/>
</dbReference>
<dbReference type="InterPro" id="IPR014722">
    <property type="entry name" value="Rib_uL2_dom2"/>
</dbReference>
<dbReference type="InterPro" id="IPR039660">
    <property type="entry name" value="Ribosomal_eL14"/>
</dbReference>
<dbReference type="InterPro" id="IPR023651">
    <property type="entry name" value="Ribosomal_eL14_arc"/>
</dbReference>
<dbReference type="InterPro" id="IPR041985">
    <property type="entry name" value="Ribosomal_eL14_KOW"/>
</dbReference>
<dbReference type="InterPro" id="IPR008991">
    <property type="entry name" value="Translation_prot_SH3-like_sf"/>
</dbReference>
<dbReference type="NCBIfam" id="NF003320">
    <property type="entry name" value="PRK04333.1"/>
    <property type="match status" value="1"/>
</dbReference>
<dbReference type="PANTHER" id="PTHR11127">
    <property type="entry name" value="60S RIBOSOMAL PROTEIN L14"/>
    <property type="match status" value="1"/>
</dbReference>
<dbReference type="PANTHER" id="PTHR11127:SF2">
    <property type="entry name" value="LARGE RIBOSOMAL SUBUNIT PROTEIN EL14"/>
    <property type="match status" value="1"/>
</dbReference>
<dbReference type="SUPFAM" id="SSF50104">
    <property type="entry name" value="Translation proteins SH3-like domain"/>
    <property type="match status" value="1"/>
</dbReference>
<evidence type="ECO:0000255" key="1">
    <source>
        <dbReference type="HAMAP-Rule" id="MF_00721"/>
    </source>
</evidence>
<evidence type="ECO:0000305" key="2"/>
<sequence length="103" mass="11484">MVKVIDIGRVVVKVLGREAGRKAVVVDIVDENYVVITGPKQLTGVRRRRVNINHIEPTDKKIDIKRGASDEEVLKAVEAAGLVEYMREKVKPKFFGITSAEVK</sequence>
<proteinExistence type="inferred from homology"/>
<protein>
    <recommendedName>
        <fullName evidence="1">Large ribosomal subunit protein eL14</fullName>
    </recommendedName>
    <alternativeName>
        <fullName evidence="2">50S ribosomal protein L14e</fullName>
    </alternativeName>
</protein>
<reference key="1">
    <citation type="submission" date="2006-12" db="EMBL/GenBank/DDBJ databases">
        <title>Complete sequence of Pyrobaculum islandicum DSM 4184.</title>
        <authorList>
            <person name="Copeland A."/>
            <person name="Lucas S."/>
            <person name="Lapidus A."/>
            <person name="Barry K."/>
            <person name="Detter J.C."/>
            <person name="Glavina del Rio T."/>
            <person name="Dalin E."/>
            <person name="Tice H."/>
            <person name="Pitluck S."/>
            <person name="Meincke L."/>
            <person name="Brettin T."/>
            <person name="Bruce D."/>
            <person name="Han C."/>
            <person name="Tapia R."/>
            <person name="Gilna P."/>
            <person name="Schmutz J."/>
            <person name="Larimer F."/>
            <person name="Land M."/>
            <person name="Hauser L."/>
            <person name="Kyrpides N."/>
            <person name="Mikhailova N."/>
            <person name="Cozen A.E."/>
            <person name="Fitz-Gibbon S.T."/>
            <person name="House C.H."/>
            <person name="Saltikov C."/>
            <person name="Lowe T."/>
            <person name="Richardson P."/>
        </authorList>
    </citation>
    <scope>NUCLEOTIDE SEQUENCE [LARGE SCALE GENOMIC DNA]</scope>
    <source>
        <strain>DSM 4184 / JCM 9189 / GEO3</strain>
    </source>
</reference>
<gene>
    <name evidence="1" type="primary">rpl14e</name>
    <name type="ordered locus">Pisl_1127</name>
</gene>
<accession>A1RTL6</accession>
<comment type="similarity">
    <text evidence="1">Belongs to the eukaryotic ribosomal protein eL14 family.</text>
</comment>
<keyword id="KW-0687">Ribonucleoprotein</keyword>
<keyword id="KW-0689">Ribosomal protein</keyword>
<organism>
    <name type="scientific">Pyrobaculum islandicum (strain DSM 4184 / JCM 9189 / GEO3)</name>
    <dbReference type="NCBI Taxonomy" id="384616"/>
    <lineage>
        <taxon>Archaea</taxon>
        <taxon>Thermoproteota</taxon>
        <taxon>Thermoprotei</taxon>
        <taxon>Thermoproteales</taxon>
        <taxon>Thermoproteaceae</taxon>
        <taxon>Pyrobaculum</taxon>
    </lineage>
</organism>